<protein>
    <recommendedName>
        <fullName evidence="1">UPF0294 protein YafD</fullName>
    </recommendedName>
</protein>
<comment type="subcellular location">
    <subcellularLocation>
        <location evidence="1">Cytoplasm</location>
    </subcellularLocation>
</comment>
<comment type="similarity">
    <text evidence="1">Belongs to the UPF0294 family.</text>
</comment>
<proteinExistence type="inferred from homology"/>
<sequence>MRKNTYAMRYVAGQPAERILPPGSFASIGQALPPGEPLSTEERIRILVWNIYKQQRAEWLSVLKNYGKDAHLVLLQEAQTTPELVQFATANYLAADQVPAFVLPQHPSGVMTLSAAHPVYCCPLREREPILRLAKSALVTVYPLPDTRLLMVVNIHAVNFSLGVDVYSKQLLPIGDQIAHHSGPVIMAGDFNAWSRRRMNALYRFAREMSLRQVRFTDDQRRRAFGRPLDFVFYRGLNVSEASVLVTRASDHNPLLVEFSPGKPDK</sequence>
<keyword id="KW-0963">Cytoplasm</keyword>
<keyword id="KW-1185">Reference proteome</keyword>
<reference key="1">
    <citation type="journal article" date="2009" name="J. Bacteriol.">
        <title>Complete genome sequence and comparative genome analysis of enteropathogenic Escherichia coli O127:H6 strain E2348/69.</title>
        <authorList>
            <person name="Iguchi A."/>
            <person name="Thomson N.R."/>
            <person name="Ogura Y."/>
            <person name="Saunders D."/>
            <person name="Ooka T."/>
            <person name="Henderson I.R."/>
            <person name="Harris D."/>
            <person name="Asadulghani M."/>
            <person name="Kurokawa K."/>
            <person name="Dean P."/>
            <person name="Kenny B."/>
            <person name="Quail M.A."/>
            <person name="Thurston S."/>
            <person name="Dougan G."/>
            <person name="Hayashi T."/>
            <person name="Parkhill J."/>
            <person name="Frankel G."/>
        </authorList>
    </citation>
    <scope>NUCLEOTIDE SEQUENCE [LARGE SCALE GENOMIC DNA]</scope>
    <source>
        <strain>E2348/69 / EPEC</strain>
    </source>
</reference>
<accession>B7UJA5</accession>
<feature type="chain" id="PRO_1000164040" description="UPF0294 protein YafD">
    <location>
        <begin position="1"/>
        <end position="266"/>
    </location>
</feature>
<name>YAFD_ECO27</name>
<organism>
    <name type="scientific">Escherichia coli O127:H6 (strain E2348/69 / EPEC)</name>
    <dbReference type="NCBI Taxonomy" id="574521"/>
    <lineage>
        <taxon>Bacteria</taxon>
        <taxon>Pseudomonadati</taxon>
        <taxon>Pseudomonadota</taxon>
        <taxon>Gammaproteobacteria</taxon>
        <taxon>Enterobacterales</taxon>
        <taxon>Enterobacteriaceae</taxon>
        <taxon>Escherichia</taxon>
    </lineage>
</organism>
<gene>
    <name evidence="1" type="primary">yafD</name>
    <name type="ordered locus">E2348C_0209</name>
</gene>
<dbReference type="EMBL" id="FM180568">
    <property type="protein sequence ID" value="CAS07757.1"/>
    <property type="molecule type" value="Genomic_DNA"/>
</dbReference>
<dbReference type="RefSeq" id="WP_001230983.1">
    <property type="nucleotide sequence ID" value="NC_011601.1"/>
</dbReference>
<dbReference type="SMR" id="B7UJA5"/>
<dbReference type="KEGG" id="ecg:E2348C_0209"/>
<dbReference type="HOGENOM" id="CLU_083563_0_0_6"/>
<dbReference type="Proteomes" id="UP000008205">
    <property type="component" value="Chromosome"/>
</dbReference>
<dbReference type="GO" id="GO:0005737">
    <property type="term" value="C:cytoplasm"/>
    <property type="evidence" value="ECO:0007669"/>
    <property type="project" value="UniProtKB-SubCell"/>
</dbReference>
<dbReference type="GO" id="GO:0003824">
    <property type="term" value="F:catalytic activity"/>
    <property type="evidence" value="ECO:0007669"/>
    <property type="project" value="InterPro"/>
</dbReference>
<dbReference type="Gene3D" id="3.60.10.10">
    <property type="entry name" value="Endonuclease/exonuclease/phosphatase"/>
    <property type="match status" value="1"/>
</dbReference>
<dbReference type="HAMAP" id="MF_01119">
    <property type="entry name" value="UPF0294"/>
    <property type="match status" value="1"/>
</dbReference>
<dbReference type="InterPro" id="IPR036691">
    <property type="entry name" value="Endo/exonu/phosph_ase_sf"/>
</dbReference>
<dbReference type="InterPro" id="IPR005135">
    <property type="entry name" value="Endo/exonuclease/phosphatase"/>
</dbReference>
<dbReference type="InterPro" id="IPR022958">
    <property type="entry name" value="UPF0294"/>
</dbReference>
<dbReference type="NCBIfam" id="NF003839">
    <property type="entry name" value="PRK05421.1-1"/>
    <property type="match status" value="1"/>
</dbReference>
<dbReference type="NCBIfam" id="NF003840">
    <property type="entry name" value="PRK05421.1-2"/>
    <property type="match status" value="1"/>
</dbReference>
<dbReference type="NCBIfam" id="NF003841">
    <property type="entry name" value="PRK05421.1-3"/>
    <property type="match status" value="1"/>
</dbReference>
<dbReference type="NCBIfam" id="NF003842">
    <property type="entry name" value="PRK05421.1-4"/>
    <property type="match status" value="1"/>
</dbReference>
<dbReference type="Pfam" id="PF03372">
    <property type="entry name" value="Exo_endo_phos"/>
    <property type="match status" value="1"/>
</dbReference>
<dbReference type="SUPFAM" id="SSF56219">
    <property type="entry name" value="DNase I-like"/>
    <property type="match status" value="1"/>
</dbReference>
<evidence type="ECO:0000255" key="1">
    <source>
        <dbReference type="HAMAP-Rule" id="MF_01119"/>
    </source>
</evidence>